<name>MAMC_PARM1</name>
<reference key="1">
    <citation type="journal article" date="2003" name="J. Biol. Chem.">
        <title>A novel protein tightly bound to bacterial magnetic particles in Magnetospirillum magneticum strain AMB-1.</title>
        <authorList>
            <person name="Arakaki A."/>
            <person name="Webb J."/>
            <person name="Matsunaga T."/>
        </authorList>
    </citation>
    <scope>NUCLEOTIDE SEQUENCE [GENOMIC DNA]</scope>
    <scope>PROTEIN SEQUENCE OF 2-42</scope>
    <scope>SUBCELLULAR LOCATION</scope>
    <source>
        <strain>ATCC 700264 / AMB-1</strain>
    </source>
</reference>
<reference key="2">
    <citation type="journal article" date="2005" name="DNA Res.">
        <title>Complete genome sequence of the facultative anaerobic magnetotactic bacterium Magnetospirillum sp. strain AMB-1.</title>
        <authorList>
            <person name="Matsunaga T."/>
            <person name="Okamura Y."/>
            <person name="Fukuda Y."/>
            <person name="Wahyudi A.T."/>
            <person name="Murase Y."/>
            <person name="Takeyama H."/>
        </authorList>
    </citation>
    <scope>NUCLEOTIDE SEQUENCE [LARGE SCALE GENOMIC DNA]</scope>
    <scope>SUBCELLULAR LOCATION</scope>
    <source>
        <strain>ATCC 700264 / AMB-1</strain>
    </source>
</reference>
<reference key="3">
    <citation type="journal article" date="2011" name="Mol. Microbiol.">
        <title>The HtrA/DegP family protease MamE is a bifunctional protein with roles in magnetosome protein localization and magnetite biomineralization.</title>
        <authorList>
            <person name="Quinlan A."/>
            <person name="Murat D."/>
            <person name="Vali H."/>
            <person name="Komeili A."/>
        </authorList>
    </citation>
    <scope>SUBCELLULAR LOCATION</scope>
    <source>
        <strain>ATCC 700264 / AMB-1</strain>
    </source>
</reference>
<reference key="4">
    <citation type="journal article" date="2012" name="Biochem. Biophys. Res. Commun.">
        <title>Effective expression of human proteins on bacterial magnetic particles in an anchor gene deletion mutant of Magnetospirillum magneticum AMB-1.</title>
        <authorList>
            <person name="Kanetsuki Y."/>
            <person name="Tanaka M."/>
            <person name="Tanaka T."/>
            <person name="Matsunaga T."/>
            <person name="Yoshino T."/>
        </authorList>
    </citation>
    <scope>SUBCELLULAR LOCATION</scope>
    <scope>DISRUPTION PHENOTYPE</scope>
    <scope>BIOTECHNOLOGY</scope>
    <source>
        <strain>ATCC 700264 / AMB-1</strain>
    </source>
</reference>
<reference key="5">
    <citation type="journal article" date="2012" name="Mol. Microbiol.">
        <title>The magnetosome membrane protein, MmsF, is a major regulator of magnetite biomineralization in Magnetospirillum magneticum AMB-1.</title>
        <authorList>
            <person name="Murat D."/>
            <person name="Falahati V."/>
            <person name="Bertinetti L."/>
            <person name="Csencsits R."/>
            <person name="Koernig A."/>
            <person name="Downing K."/>
            <person name="Faivre D."/>
            <person name="Komeili A."/>
        </authorList>
    </citation>
    <scope>DISRUPTION PHENOTYPE</scope>
    <source>
        <strain>ATCC 700264 / AMB-1</strain>
    </source>
</reference>
<reference key="6">
    <citation type="journal article" date="2014" name="Mol. Microbiol.">
        <title>Co-ordinated functions of Mms proteins define the surface structure of cubo-octahedral magnetite crystals in magnetotactic bacteria.</title>
        <authorList>
            <person name="Arakaki A."/>
            <person name="Yamagishi A."/>
            <person name="Fukuyo A."/>
            <person name="Tanaka M."/>
            <person name="Matsunaga T."/>
        </authorList>
    </citation>
    <scope>FUNCTION</scope>
    <scope>DISRUPTION PHENOTYPE</scope>
    <source>
        <strain>ATCC 700264 / AMB-1</strain>
    </source>
</reference>
<reference key="7">
    <citation type="journal article" date="2016" name="J. Bacteriol.">
        <title>Comparative subcellular localization analysis of magnetosome proteins reveals a unique localization behavior of Mms6 protein onto magnetite crystals.</title>
        <authorList>
            <person name="Arakaki A."/>
            <person name="Kikuchi D."/>
            <person name="Tanaka M."/>
            <person name="Yamagishi A."/>
            <person name="Yoda T."/>
            <person name="Matsunaga T."/>
        </authorList>
    </citation>
    <scope>SUBCELLULAR LOCATION</scope>
    <source>
        <strain>ATCC 700264 / AMB-1</strain>
    </source>
</reference>
<reference key="8">
    <citation type="journal article" date="2017" name="MBio">
        <title>Tethered Magnets Are the Key to Magnetotaxis: Direct Observations of Magnetospirillum magneticum AMB-1 Show that MamK Distributes Magnetosome Organelles Equally to Daughter Cells.</title>
        <authorList>
            <person name="Taoka A."/>
            <person name="Kiyokawa A."/>
            <person name="Uesugi C."/>
            <person name="Kikuchi Y."/>
            <person name="Oestreicher Z."/>
            <person name="Morii K."/>
            <person name="Eguchi Y."/>
            <person name="Fukumori Y."/>
        </authorList>
    </citation>
    <scope>SUBCELLULAR LOCATION</scope>
    <source>
        <strain>ATCC 700264 / AMB-1</strain>
    </source>
</reference>
<reference key="9">
    <citation type="journal article" date="2018" name="Front. Microbiol.">
        <title>Understanding the biomineralization role of magnetite-interacting components (MICs) from magnetotactic bacteria.</title>
        <authorList>
            <person name="Nudelman H."/>
            <person name="Lee Y.Z."/>
            <person name="Hung Y.L."/>
            <person name="Kolusheva S."/>
            <person name="Upcher A."/>
            <person name="Chen Y.C."/>
            <person name="Chen J.Y."/>
            <person name="Sue S.C."/>
            <person name="Zarivach R."/>
        </authorList>
    </citation>
    <scope>FUNCTION</scope>
    <scope>DOMAIN</scope>
    <scope>MUTAGENESIS OF ASP-49</scope>
    <source>
        <strain>ATCC 700264 / AMB-1</strain>
    </source>
</reference>
<reference evidence="21 22" key="10">
    <citation type="journal article" date="2016" name="J. Struct. Biol.">
        <title>Structure-function studies of the magnetite-biomineralizing magnetosome-associated protein MamC.</title>
        <authorList>
            <person name="Nudelman H."/>
            <person name="Tercedor C.V."/>
            <person name="Kolusheva S."/>
            <person name="Gonzalez T.P."/>
            <person name="Widdrat M."/>
            <person name="Grimberg N."/>
            <person name="Levi H."/>
            <person name="Nelkenbaum O."/>
            <person name="Davidov G."/>
            <person name="Faivre D."/>
            <person name="Jimenez-Lopez C."/>
            <person name="Zarivach R."/>
        </authorList>
    </citation>
    <scope>X-RAY CRYSTALLOGRAPHY (2.70 ANGSTROMS) OF 36-56</scope>
    <scope>FUNCTION</scope>
    <scope>DOMAIN</scope>
    <scope>IRON-BINDING</scope>
    <scope>TOPOLOGY</scope>
    <scope>MUTAGENESIS OF 45-GLU--ASP-49; GLU-45 AND ASP-49</scope>
    <source>
        <strain>ATCC 700264 / AMB-1</strain>
    </source>
</reference>
<reference evidence="23 24" key="11">
    <citation type="journal article" date="2018" name="Acta Crystallogr. D">
        <title>The importance of the helical structure of a MamC-derived magnetite-interacting peptide for its function in magnetite formation.</title>
        <authorList>
            <person name="Nudelman H."/>
            <person name="Gonzalez T.P."/>
            <person name="Kolushiva S."/>
            <person name="Widdrat M."/>
            <person name="Reichel V."/>
            <person name="Davidov G."/>
            <person name="Bitton R."/>
            <person name="Faivre D."/>
            <person name="Lopez C.J."/>
            <person name="Zarivach R."/>
        </authorList>
    </citation>
    <scope>X-RAY CRYSTALLOGRAPHY (2.29 ANGSTROMS) OF 36-56</scope>
    <scope>DOMAIN</scope>
    <source>
        <strain>ATCC 700264 / AMB-1</strain>
    </source>
</reference>
<feature type="initiator methionine" description="Removed" evidence="3">
    <location>
        <position position="1"/>
    </location>
</feature>
<feature type="chain" id="PRO_0000447790" description="Magnetosome protein MamC">
    <location>
        <begin position="2"/>
        <end position="124"/>
    </location>
</feature>
<feature type="topological domain" description="Cytoplasmic" evidence="16">
    <location>
        <begin position="2"/>
        <end position="8"/>
    </location>
</feature>
<feature type="transmembrane region" description="Helical" evidence="2">
    <location>
        <begin position="9"/>
        <end position="29"/>
    </location>
</feature>
<feature type="topological domain" description="Lumenal" evidence="19">
    <location>
        <begin position="30"/>
        <end position="64"/>
    </location>
</feature>
<feature type="transmembrane region" description="Helical" evidence="2">
    <location>
        <begin position="65"/>
        <end position="85"/>
    </location>
</feature>
<feature type="topological domain" description="Cytoplasmic" evidence="16">
    <location>
        <begin position="86"/>
        <end position="124"/>
    </location>
</feature>
<feature type="region of interest" description="MIC, when fused with the C-terminus of maltose-binding protein (MBP) or expressed as a fragment, improves quality of iron particles during precipitation experiments, binds magnetite" evidence="9 13">
    <location>
        <begin position="36"/>
        <end position="56"/>
    </location>
</feature>
<feature type="mutagenesis site" description="Fused MIC no longer improves iron particles, does not bind magnetite." evidence="9">
    <original>EAAID</original>
    <variation>AAAIA</variation>
    <location>
        <begin position="45"/>
        <end position="49"/>
    </location>
</feature>
<feature type="mutagenesis site" description="Fused MIC no longer improves iron particles, does not bind magnetite." evidence="9">
    <original>E</original>
    <variation>A</variation>
    <location>
        <position position="45"/>
    </location>
</feature>
<feature type="mutagenesis site" description="MIC expressed as a fragment or fused to MBP no longer improves iron particles, binds magnetite." evidence="9 13">
    <original>D</original>
    <variation>A</variation>
    <location>
        <position position="49"/>
    </location>
</feature>
<feature type="strand" evidence="25">
    <location>
        <begin position="36"/>
        <end position="40"/>
    </location>
</feature>
<feature type="strand" evidence="25">
    <location>
        <begin position="52"/>
        <end position="56"/>
    </location>
</feature>
<proteinExistence type="evidence at protein level"/>
<keyword id="KW-0002">3D-structure</keyword>
<keyword id="KW-0091">Biomineralization</keyword>
<keyword id="KW-0903">Direct protein sequencing</keyword>
<keyword id="KW-0408">Iron</keyword>
<keyword id="KW-1281">Magnetosome</keyword>
<keyword id="KW-0472">Membrane</keyword>
<keyword id="KW-0479">Metal-binding</keyword>
<keyword id="KW-0812">Transmembrane</keyword>
<keyword id="KW-1133">Transmembrane helix</keyword>
<organism>
    <name type="scientific">Paramagnetospirillum magneticum (strain ATCC 700264 / AMB-1)</name>
    <name type="common">Magnetospirillum magneticum</name>
    <dbReference type="NCBI Taxonomy" id="342108"/>
    <lineage>
        <taxon>Bacteria</taxon>
        <taxon>Pseudomonadati</taxon>
        <taxon>Pseudomonadota</taxon>
        <taxon>Alphaproteobacteria</taxon>
        <taxon>Rhodospirillales</taxon>
        <taxon>Magnetospirillaceae</taxon>
        <taxon>Paramagnetospirillum</taxon>
    </lineage>
</organism>
<evidence type="ECO:0000250" key="1">
    <source>
        <dbReference type="UniProtKB" id="Q93DY1"/>
    </source>
</evidence>
<evidence type="ECO:0000255" key="2"/>
<evidence type="ECO:0000269" key="3">
    <source>
    </source>
</evidence>
<evidence type="ECO:0000269" key="4">
    <source>
    </source>
</evidence>
<evidence type="ECO:0000269" key="5">
    <source>
    </source>
</evidence>
<evidence type="ECO:0000269" key="6">
    <source>
    </source>
</evidence>
<evidence type="ECO:0000269" key="7">
    <source>
    </source>
</evidence>
<evidence type="ECO:0000269" key="8">
    <source>
    </source>
</evidence>
<evidence type="ECO:0000269" key="9">
    <source>
    </source>
</evidence>
<evidence type="ECO:0000269" key="10">
    <source>
    </source>
</evidence>
<evidence type="ECO:0000269" key="11">
    <source>
    </source>
</evidence>
<evidence type="ECO:0000269" key="12">
    <source>
    </source>
</evidence>
<evidence type="ECO:0000269" key="13">
    <source>
    </source>
</evidence>
<evidence type="ECO:0000303" key="14">
    <source>
    </source>
</evidence>
<evidence type="ECO:0000303" key="15">
    <source>
    </source>
</evidence>
<evidence type="ECO:0000305" key="16"/>
<evidence type="ECO:0000305" key="17">
    <source>
    </source>
</evidence>
<evidence type="ECO:0000305" key="18">
    <source>
    </source>
</evidence>
<evidence type="ECO:0000305" key="19">
    <source>
    </source>
</evidence>
<evidence type="ECO:0000305" key="20">
    <source>
    </source>
</evidence>
<evidence type="ECO:0007744" key="21">
    <source>
        <dbReference type="PDB" id="5E7U"/>
    </source>
</evidence>
<evidence type="ECO:0007744" key="22">
    <source>
        <dbReference type="PDB" id="5I69"/>
    </source>
</evidence>
<evidence type="ECO:0007744" key="23">
    <source>
        <dbReference type="PDB" id="5MM3"/>
    </source>
</evidence>
<evidence type="ECO:0007744" key="24">
    <source>
        <dbReference type="PDB" id="6EQZ"/>
    </source>
</evidence>
<evidence type="ECO:0007829" key="25">
    <source>
        <dbReference type="PDB" id="6EQZ"/>
    </source>
</evidence>
<dbReference type="EMBL" id="AB096081">
    <property type="protein sequence ID" value="BAC65160.1"/>
    <property type="molecule type" value="Genomic_DNA"/>
</dbReference>
<dbReference type="EMBL" id="AP007255">
    <property type="protein sequence ID" value="BAE49755.1"/>
    <property type="status" value="ALT_INIT"/>
    <property type="molecule type" value="Genomic_DNA"/>
</dbReference>
<dbReference type="PDB" id="5E7U">
    <property type="method" value="X-ray"/>
    <property type="resolution" value="2.80 A"/>
    <property type="chains" value="A=36-57"/>
</dbReference>
<dbReference type="PDB" id="5I69">
    <property type="method" value="X-ray"/>
    <property type="resolution" value="2.70 A"/>
    <property type="chains" value="A=36-57"/>
</dbReference>
<dbReference type="PDB" id="5MM3">
    <property type="method" value="X-ray"/>
    <property type="resolution" value="2.10 A"/>
    <property type="chains" value="A/B=57-78"/>
</dbReference>
<dbReference type="PDB" id="6EQZ">
    <property type="method" value="X-ray"/>
    <property type="resolution" value="2.29 A"/>
    <property type="chains" value="A/B/D/G=36-56"/>
</dbReference>
<dbReference type="PDBsum" id="5E7U"/>
<dbReference type="PDBsum" id="5I69"/>
<dbReference type="PDBsum" id="5MM3"/>
<dbReference type="PDBsum" id="6EQZ"/>
<dbReference type="SMR" id="Q2W8S0"/>
<dbReference type="STRING" id="342108.amb0951"/>
<dbReference type="TCDB" id="9.B.90.1.2">
    <property type="family name" value="the putative channel forming 2 tmss mamc (mamc) family"/>
</dbReference>
<dbReference type="KEGG" id="mag:amb0951"/>
<dbReference type="HOGENOM" id="CLU_1989955_0_0_5"/>
<dbReference type="OrthoDB" id="7361236at2"/>
<dbReference type="EvolutionaryTrace" id="Q2W8S0"/>
<dbReference type="Proteomes" id="UP000007058">
    <property type="component" value="Chromosome"/>
</dbReference>
<dbReference type="GO" id="GO:0110146">
    <property type="term" value="C:magnetosome membrane"/>
    <property type="evidence" value="ECO:0000314"/>
    <property type="project" value="UniProtKB"/>
</dbReference>
<dbReference type="GO" id="GO:0046872">
    <property type="term" value="F:metal ion binding"/>
    <property type="evidence" value="ECO:0007669"/>
    <property type="project" value="UniProtKB-KW"/>
</dbReference>
<dbReference type="NCBIfam" id="NF038051">
    <property type="entry name" value="MamC"/>
    <property type="match status" value="1"/>
</dbReference>
<gene>
    <name evidence="15" type="primary">mamC</name>
    <name evidence="14" type="synonym">mms13</name>
    <name type="ordered locus">amb0951</name>
</gene>
<accession>Q2W8S0</accession>
<accession>Q83VL9</accession>
<sequence length="124" mass="12378">MPFHLAPYLAKSVPGVGVLGALVGGAAALAKNVRLLKEKRITNTEAAIDTGKETVGAGLATALSAVAATAVGGGLVVSLGTALVAGVAAKYAWDRGVDLVEKELNRGKAANGASDEDILRDELA</sequence>
<comment type="function">
    <text evidence="18 19 20">Probably involved in magnetite crystal growth (Probable). The lumenal domain may bind the magnetite crystals, affecting crystal size and shape (Probable).</text>
</comment>
<comment type="subunit">
    <text evidence="1">Probably interacts with MamA.</text>
</comment>
<comment type="subcellular location">
    <subcellularLocation>
        <location evidence="3 4 5 10 11 17">Magnetosome membrane</location>
        <topology evidence="2">Multi-pass membrane protein</topology>
    </subcellularLocation>
    <text evidence="3 5 10 11">Tightly associated with magnetite crystals (PubMed:12496282). Tagged protein forms straight lines with a punctate pattern extending along most of the cell associated with its inner curvature, in the correct position to be associated with magnetite-containing magnetosomes (PubMed:21414040, PubMed:27481925, PubMed:28790202). In a mamE disruption MamC forms 1-2 foci in the cell (PubMed:21414040).</text>
</comment>
<comment type="domain">
    <text evidence="9 12 13">The lumenal magnetite interacting component (MIC, residues 36-56) binds magnetite in vitro when fused C-terminally to maltose-binding protein (PubMed:26970040). Isolated MIC binds poorly to Fe(2+), Fe(3+), or Ni(2+), but improves quality of iron particles during iron co-precipitation experiments (PubMed:30405554). The lumenal loop (MIC) probably has to form a helix to interact with magnetite (PubMed:29372895).</text>
</comment>
<comment type="disruption phenotype">
    <text evidence="6 7 8">No growth phenotype, magnetite crystals are slightly smaller with a wild-type surface (PubMed:22846572, PubMed:24961165). Deletion of the probable mamGFDC operon leads to a slight reduction in magnetic response and slightly narrower magnetite crystals (PubMed:22716969).</text>
</comment>
<comment type="biotechnology">
    <text evidence="7">Foreign proteins fused to the N-terminal membrane-targeted domain of this protein are expressed on the magnetosome membrane, subsequent purification of the fusion protein occurs by extracting the organelles from the lysed bacteria using magnets. In this study human thyroid-stimulating hormone receptor (TSHR) and class II major histocompatibility complex (MHC II) were expressed and purified; expression is better when the endogenous gene is deleted.</text>
</comment>
<comment type="miscellaneous">
    <text evidence="16">This bacteria makes up to 20 cubo-octahedral magnetosomes of about 45 nm in diameter which contain membrane-bound crystals of magnetite (Fe(3)O(4)).</text>
</comment>
<comment type="similarity">
    <text evidence="16">Belongs to the magnetosome MamC family.</text>
</comment>
<comment type="sequence caution" evidence="16">
    <conflict type="erroneous initiation">
        <sequence resource="EMBL-CDS" id="BAE49755"/>
    </conflict>
    <text>Extended N-terminus.</text>
</comment>
<protein>
    <recommendedName>
        <fullName evidence="16">Magnetosome protein MamC</fullName>
    </recommendedName>
</protein>